<name>CYSC1_BACSU</name>
<reference key="1">
    <citation type="submission" date="1997-10" db="EMBL/GenBank/DDBJ databases">
        <title>Cloning and sequencing 8 Kbp of DNA from Bacillus subtilis downstream of the pyr operon.</title>
        <authorList>
            <person name="Foulger D."/>
            <person name="Errington J."/>
        </authorList>
    </citation>
    <scope>NUCLEOTIDE SEQUENCE [GENOMIC DNA]</scope>
    <source>
        <strain>168</strain>
    </source>
</reference>
<reference key="2">
    <citation type="journal article" date="1997" name="Nature">
        <title>The complete genome sequence of the Gram-positive bacterium Bacillus subtilis.</title>
        <authorList>
            <person name="Kunst F."/>
            <person name="Ogasawara N."/>
            <person name="Moszer I."/>
            <person name="Albertini A.M."/>
            <person name="Alloni G."/>
            <person name="Azevedo V."/>
            <person name="Bertero M.G."/>
            <person name="Bessieres P."/>
            <person name="Bolotin A."/>
            <person name="Borchert S."/>
            <person name="Borriss R."/>
            <person name="Boursier L."/>
            <person name="Brans A."/>
            <person name="Braun M."/>
            <person name="Brignell S.C."/>
            <person name="Bron S."/>
            <person name="Brouillet S."/>
            <person name="Bruschi C.V."/>
            <person name="Caldwell B."/>
            <person name="Capuano V."/>
            <person name="Carter N.M."/>
            <person name="Choi S.-K."/>
            <person name="Codani J.-J."/>
            <person name="Connerton I.F."/>
            <person name="Cummings N.J."/>
            <person name="Daniel R.A."/>
            <person name="Denizot F."/>
            <person name="Devine K.M."/>
            <person name="Duesterhoeft A."/>
            <person name="Ehrlich S.D."/>
            <person name="Emmerson P.T."/>
            <person name="Entian K.-D."/>
            <person name="Errington J."/>
            <person name="Fabret C."/>
            <person name="Ferrari E."/>
            <person name="Foulger D."/>
            <person name="Fritz C."/>
            <person name="Fujita M."/>
            <person name="Fujita Y."/>
            <person name="Fuma S."/>
            <person name="Galizzi A."/>
            <person name="Galleron N."/>
            <person name="Ghim S.-Y."/>
            <person name="Glaser P."/>
            <person name="Goffeau A."/>
            <person name="Golightly E.J."/>
            <person name="Grandi G."/>
            <person name="Guiseppi G."/>
            <person name="Guy B.J."/>
            <person name="Haga K."/>
            <person name="Haiech J."/>
            <person name="Harwood C.R."/>
            <person name="Henaut A."/>
            <person name="Hilbert H."/>
            <person name="Holsappel S."/>
            <person name="Hosono S."/>
            <person name="Hullo M.-F."/>
            <person name="Itaya M."/>
            <person name="Jones L.-M."/>
            <person name="Joris B."/>
            <person name="Karamata D."/>
            <person name="Kasahara Y."/>
            <person name="Klaerr-Blanchard M."/>
            <person name="Klein C."/>
            <person name="Kobayashi Y."/>
            <person name="Koetter P."/>
            <person name="Koningstein G."/>
            <person name="Krogh S."/>
            <person name="Kumano M."/>
            <person name="Kurita K."/>
            <person name="Lapidus A."/>
            <person name="Lardinois S."/>
            <person name="Lauber J."/>
            <person name="Lazarevic V."/>
            <person name="Lee S.-M."/>
            <person name="Levine A."/>
            <person name="Liu H."/>
            <person name="Masuda S."/>
            <person name="Mauel C."/>
            <person name="Medigue C."/>
            <person name="Medina N."/>
            <person name="Mellado R.P."/>
            <person name="Mizuno M."/>
            <person name="Moestl D."/>
            <person name="Nakai S."/>
            <person name="Noback M."/>
            <person name="Noone D."/>
            <person name="O'Reilly M."/>
            <person name="Ogawa K."/>
            <person name="Ogiwara A."/>
            <person name="Oudega B."/>
            <person name="Park S.-H."/>
            <person name="Parro V."/>
            <person name="Pohl T.M."/>
            <person name="Portetelle D."/>
            <person name="Porwollik S."/>
            <person name="Prescott A.M."/>
            <person name="Presecan E."/>
            <person name="Pujic P."/>
            <person name="Purnelle B."/>
            <person name="Rapoport G."/>
            <person name="Rey M."/>
            <person name="Reynolds S."/>
            <person name="Rieger M."/>
            <person name="Rivolta C."/>
            <person name="Rocha E."/>
            <person name="Roche B."/>
            <person name="Rose M."/>
            <person name="Sadaie Y."/>
            <person name="Sato T."/>
            <person name="Scanlan E."/>
            <person name="Schleich S."/>
            <person name="Schroeter R."/>
            <person name="Scoffone F."/>
            <person name="Sekiguchi J."/>
            <person name="Sekowska A."/>
            <person name="Seror S.J."/>
            <person name="Serror P."/>
            <person name="Shin B.-S."/>
            <person name="Soldo B."/>
            <person name="Sorokin A."/>
            <person name="Tacconi E."/>
            <person name="Takagi T."/>
            <person name="Takahashi H."/>
            <person name="Takemaru K."/>
            <person name="Takeuchi M."/>
            <person name="Tamakoshi A."/>
            <person name="Tanaka T."/>
            <person name="Terpstra P."/>
            <person name="Tognoni A."/>
            <person name="Tosato V."/>
            <person name="Uchiyama S."/>
            <person name="Vandenbol M."/>
            <person name="Vannier F."/>
            <person name="Vassarotti A."/>
            <person name="Viari A."/>
            <person name="Wambutt R."/>
            <person name="Wedler E."/>
            <person name="Wedler H."/>
            <person name="Weitzenegger T."/>
            <person name="Winters P."/>
            <person name="Wipat A."/>
            <person name="Yamamoto H."/>
            <person name="Yamane K."/>
            <person name="Yasumoto K."/>
            <person name="Yata K."/>
            <person name="Yoshida K."/>
            <person name="Yoshikawa H.-F."/>
            <person name="Zumstein E."/>
            <person name="Yoshikawa H."/>
            <person name="Danchin A."/>
        </authorList>
    </citation>
    <scope>NUCLEOTIDE SEQUENCE [LARGE SCALE GENOMIC DNA]</scope>
    <source>
        <strain>168</strain>
    </source>
</reference>
<reference key="3">
    <citation type="journal article" date="2000" name="J. Bacteriol.">
        <title>Transcriptional control of the sulfur-regulated cysH operon, containing genes involved in L-cysteine biosynthesis in Bacillus subtilis.</title>
        <authorList>
            <person name="Mansilla M.C."/>
            <person name="Albanesi D."/>
            <person name="de Mendoza D."/>
        </authorList>
    </citation>
    <scope>INDUCTION</scope>
    <source>
        <strain>168 / JH642</strain>
    </source>
</reference>
<proteinExistence type="evidence at transcript level"/>
<feature type="chain" id="PRO_0000105903" description="Probable adenylyl-sulfate kinase">
    <location>
        <begin position="1"/>
        <end position="197"/>
    </location>
</feature>
<feature type="active site" description="Phosphoserine intermediate" evidence="1">
    <location>
        <position position="107"/>
    </location>
</feature>
<feature type="binding site" evidence="2">
    <location>
        <begin position="33"/>
        <end position="40"/>
    </location>
    <ligand>
        <name>ATP</name>
        <dbReference type="ChEBI" id="CHEBI:30616"/>
    </ligand>
</feature>
<keyword id="KW-0067">ATP-binding</keyword>
<keyword id="KW-0418">Kinase</keyword>
<keyword id="KW-0547">Nucleotide-binding</keyword>
<keyword id="KW-0597">Phosphoprotein</keyword>
<keyword id="KW-1185">Reference proteome</keyword>
<keyword id="KW-0808">Transferase</keyword>
<sequence>MTNRDIVWHEASITKEEYQQKNKHKSSILWLTGLSGSGKSTIANAAARELFEQGYQVIVLDGDNIRHGLNRDLGFSDEDRKENIRRIGEVAKLFVQQGTIVITAFISPFREDRQQVRELVEAGEFNEVYIKCDLDICEQRDPKGLYKKARNGEIPFFTGIDSPYEEPEAPELVLDSGQHDREACKNQLIEFVKQKLS</sequence>
<organism>
    <name type="scientific">Bacillus subtilis (strain 168)</name>
    <dbReference type="NCBI Taxonomy" id="224308"/>
    <lineage>
        <taxon>Bacteria</taxon>
        <taxon>Bacillati</taxon>
        <taxon>Bacillota</taxon>
        <taxon>Bacilli</taxon>
        <taxon>Bacillales</taxon>
        <taxon>Bacillaceae</taxon>
        <taxon>Bacillus</taxon>
    </lineage>
</organism>
<gene>
    <name type="primary">cysC</name>
    <name type="synonym">ylnC</name>
    <name type="ordered locus">BSU15600</name>
</gene>
<evidence type="ECO:0000250" key="1"/>
<evidence type="ECO:0000255" key="2"/>
<evidence type="ECO:0000269" key="3">
    <source>
    </source>
</evidence>
<evidence type="ECO:0000305" key="4"/>
<protein>
    <recommendedName>
        <fullName>Probable adenylyl-sulfate kinase</fullName>
        <ecNumber>2.7.1.25</ecNumber>
    </recommendedName>
    <alternativeName>
        <fullName>APS kinase</fullName>
    </alternativeName>
    <alternativeName>
        <fullName>ATP adenosine-5'-phosphosulfate 3'-phosphotransferase</fullName>
    </alternativeName>
    <alternativeName>
        <fullName>Adenosine-5'-phosphosulfate kinase</fullName>
    </alternativeName>
</protein>
<accession>O34577</accession>
<comment type="function">
    <text evidence="1">Catalyzes the synthesis of activated sulfate.</text>
</comment>
<comment type="catalytic activity">
    <reaction>
        <text>adenosine 5'-phosphosulfate + ATP = 3'-phosphoadenylyl sulfate + ADP + H(+)</text>
        <dbReference type="Rhea" id="RHEA:24152"/>
        <dbReference type="ChEBI" id="CHEBI:15378"/>
        <dbReference type="ChEBI" id="CHEBI:30616"/>
        <dbReference type="ChEBI" id="CHEBI:58243"/>
        <dbReference type="ChEBI" id="CHEBI:58339"/>
        <dbReference type="ChEBI" id="CHEBI:456216"/>
        <dbReference type="EC" id="2.7.1.25"/>
    </reaction>
</comment>
<comment type="pathway">
    <text>Sulfur metabolism; hydrogen sulfide biosynthesis; sulfite from sulfate: step 2/3.</text>
</comment>
<comment type="induction">
    <text evidence="3">Up-regulated by sulfur starvation and repressed by cysteine. Also induced by O-acetyl-L-serine (OAS), a direct precursor of cysteine, maybe via inactivation of a putative transcriptional repressor of the cysH operon whose activity is controlled by the intracellular levels of OAS.</text>
</comment>
<comment type="similarity">
    <text evidence="4">Belongs to the APS kinase family.</text>
</comment>
<dbReference type="EC" id="2.7.1.25"/>
<dbReference type="EMBL" id="AJ000974">
    <property type="protein sequence ID" value="CAA04412.1"/>
    <property type="molecule type" value="Genomic_DNA"/>
</dbReference>
<dbReference type="EMBL" id="AL009126">
    <property type="protein sequence ID" value="CAB13434.1"/>
    <property type="molecule type" value="Genomic_DNA"/>
</dbReference>
<dbReference type="PIR" id="C69877">
    <property type="entry name" value="C69877"/>
</dbReference>
<dbReference type="RefSeq" id="NP_389443.1">
    <property type="nucleotide sequence ID" value="NC_000964.3"/>
</dbReference>
<dbReference type="RefSeq" id="WP_003232097.1">
    <property type="nucleotide sequence ID" value="NZ_OZ025638.1"/>
</dbReference>
<dbReference type="SMR" id="O34577"/>
<dbReference type="FunCoup" id="O34577">
    <property type="interactions" value="161"/>
</dbReference>
<dbReference type="IntAct" id="O34577">
    <property type="interactions" value="1"/>
</dbReference>
<dbReference type="MINT" id="O34577"/>
<dbReference type="STRING" id="224308.BSU15600"/>
<dbReference type="PaxDb" id="224308-BSU15600"/>
<dbReference type="EnsemblBacteria" id="CAB13434">
    <property type="protein sequence ID" value="CAB13434"/>
    <property type="gene ID" value="BSU_15600"/>
</dbReference>
<dbReference type="GeneID" id="937102"/>
<dbReference type="KEGG" id="bsu:BSU15600"/>
<dbReference type="PATRIC" id="fig|224308.179.peg.1700"/>
<dbReference type="eggNOG" id="COG0529">
    <property type="taxonomic scope" value="Bacteria"/>
</dbReference>
<dbReference type="InParanoid" id="O34577"/>
<dbReference type="OrthoDB" id="9804504at2"/>
<dbReference type="PhylomeDB" id="O34577"/>
<dbReference type="BioCyc" id="BSUB:BSU15600-MONOMER"/>
<dbReference type="UniPathway" id="UPA00140">
    <property type="reaction ID" value="UER00205"/>
</dbReference>
<dbReference type="Proteomes" id="UP000001570">
    <property type="component" value="Chromosome"/>
</dbReference>
<dbReference type="GO" id="GO:0004020">
    <property type="term" value="F:adenylylsulfate kinase activity"/>
    <property type="evidence" value="ECO:0000318"/>
    <property type="project" value="GO_Central"/>
</dbReference>
<dbReference type="GO" id="GO:0005524">
    <property type="term" value="F:ATP binding"/>
    <property type="evidence" value="ECO:0007669"/>
    <property type="project" value="UniProtKB-UniRule"/>
</dbReference>
<dbReference type="GO" id="GO:0070814">
    <property type="term" value="P:hydrogen sulfide biosynthetic process"/>
    <property type="evidence" value="ECO:0007669"/>
    <property type="project" value="UniProtKB-UniRule"/>
</dbReference>
<dbReference type="GO" id="GO:0000103">
    <property type="term" value="P:sulfate assimilation"/>
    <property type="evidence" value="ECO:0007669"/>
    <property type="project" value="UniProtKB-UniRule"/>
</dbReference>
<dbReference type="CDD" id="cd02027">
    <property type="entry name" value="APSK"/>
    <property type="match status" value="1"/>
</dbReference>
<dbReference type="FunFam" id="3.40.50.300:FF:000212">
    <property type="entry name" value="Adenylyl-sulfate kinase"/>
    <property type="match status" value="1"/>
</dbReference>
<dbReference type="Gene3D" id="3.40.50.300">
    <property type="entry name" value="P-loop containing nucleotide triphosphate hydrolases"/>
    <property type="match status" value="1"/>
</dbReference>
<dbReference type="HAMAP" id="MF_00065">
    <property type="entry name" value="Adenylyl_sulf_kinase"/>
    <property type="match status" value="1"/>
</dbReference>
<dbReference type="InterPro" id="IPR002891">
    <property type="entry name" value="APS_kinase"/>
</dbReference>
<dbReference type="InterPro" id="IPR027417">
    <property type="entry name" value="P-loop_NTPase"/>
</dbReference>
<dbReference type="NCBIfam" id="TIGR00455">
    <property type="entry name" value="apsK"/>
    <property type="match status" value="1"/>
</dbReference>
<dbReference type="NCBIfam" id="NF003013">
    <property type="entry name" value="PRK03846.1"/>
    <property type="match status" value="1"/>
</dbReference>
<dbReference type="NCBIfam" id="NF004041">
    <property type="entry name" value="PRK05541.1"/>
    <property type="match status" value="1"/>
</dbReference>
<dbReference type="PANTHER" id="PTHR11055">
    <property type="entry name" value="BIFUNCTIONAL 3'-PHOSPHOADENOSINE 5'-PHOSPHOSULFATE SYNTHASE"/>
    <property type="match status" value="1"/>
</dbReference>
<dbReference type="PANTHER" id="PTHR11055:SF1">
    <property type="entry name" value="PAPS SYNTHETASE, ISOFORM D"/>
    <property type="match status" value="1"/>
</dbReference>
<dbReference type="Pfam" id="PF01583">
    <property type="entry name" value="APS_kinase"/>
    <property type="match status" value="1"/>
</dbReference>
<dbReference type="SUPFAM" id="SSF52540">
    <property type="entry name" value="P-loop containing nucleoside triphosphate hydrolases"/>
    <property type="match status" value="1"/>
</dbReference>